<protein>
    <recommendedName>
        <fullName>Cellulose synthase operon protein C</fullName>
    </recommendedName>
</protein>
<proteinExistence type="inferred from homology"/>
<organism>
    <name type="scientific">Xanthomonas axonopodis pv. citri (strain 306)</name>
    <dbReference type="NCBI Taxonomy" id="190486"/>
    <lineage>
        <taxon>Bacteria</taxon>
        <taxon>Pseudomonadati</taxon>
        <taxon>Pseudomonadota</taxon>
        <taxon>Gammaproteobacteria</taxon>
        <taxon>Lysobacterales</taxon>
        <taxon>Lysobacteraceae</taxon>
        <taxon>Xanthomonas</taxon>
    </lineage>
</organism>
<dbReference type="EMBL" id="AE008923">
    <property type="protein sequence ID" value="AAM38358.1"/>
    <property type="molecule type" value="Genomic_DNA"/>
</dbReference>
<dbReference type="RefSeq" id="WP_011052327.1">
    <property type="nucleotide sequence ID" value="NC_003919.1"/>
</dbReference>
<dbReference type="SMR" id="P58938"/>
<dbReference type="KEGG" id="xac:XAC3515"/>
<dbReference type="eggNOG" id="COG0457">
    <property type="taxonomic scope" value="Bacteria"/>
</dbReference>
<dbReference type="HOGENOM" id="CLU_001631_1_0_6"/>
<dbReference type="UniPathway" id="UPA00694"/>
<dbReference type="Proteomes" id="UP000000576">
    <property type="component" value="Chromosome"/>
</dbReference>
<dbReference type="GO" id="GO:0019867">
    <property type="term" value="C:outer membrane"/>
    <property type="evidence" value="ECO:0007669"/>
    <property type="project" value="InterPro"/>
</dbReference>
<dbReference type="GO" id="GO:0030244">
    <property type="term" value="P:cellulose biosynthetic process"/>
    <property type="evidence" value="ECO:0007669"/>
    <property type="project" value="UniProtKB-KW"/>
</dbReference>
<dbReference type="GO" id="GO:0006011">
    <property type="term" value="P:UDP-alpha-D-glucose metabolic process"/>
    <property type="evidence" value="ECO:0007669"/>
    <property type="project" value="InterPro"/>
</dbReference>
<dbReference type="Gene3D" id="1.25.40.10">
    <property type="entry name" value="Tetratricopeptide repeat domain"/>
    <property type="match status" value="4"/>
</dbReference>
<dbReference type="InterPro" id="IPR008410">
    <property type="entry name" value="BCSC_C"/>
</dbReference>
<dbReference type="InterPro" id="IPR003921">
    <property type="entry name" value="Cell_synth_C"/>
</dbReference>
<dbReference type="InterPro" id="IPR011990">
    <property type="entry name" value="TPR-like_helical_dom_sf"/>
</dbReference>
<dbReference type="InterPro" id="IPR019734">
    <property type="entry name" value="TPR_rpt"/>
</dbReference>
<dbReference type="PANTHER" id="PTHR12558">
    <property type="entry name" value="CELL DIVISION CYCLE 16,23,27"/>
    <property type="match status" value="1"/>
</dbReference>
<dbReference type="PANTHER" id="PTHR12558:SF13">
    <property type="entry name" value="CELL DIVISION CYCLE PROTEIN 27 HOMOLOG"/>
    <property type="match status" value="1"/>
</dbReference>
<dbReference type="Pfam" id="PF05420">
    <property type="entry name" value="BCSC_C"/>
    <property type="match status" value="1"/>
</dbReference>
<dbReference type="Pfam" id="PF13432">
    <property type="entry name" value="TPR_16"/>
    <property type="match status" value="2"/>
</dbReference>
<dbReference type="Pfam" id="PF14559">
    <property type="entry name" value="TPR_19"/>
    <property type="match status" value="4"/>
</dbReference>
<dbReference type="PRINTS" id="PR01441">
    <property type="entry name" value="CELLSNTHASEC"/>
</dbReference>
<dbReference type="SMART" id="SM00028">
    <property type="entry name" value="TPR"/>
    <property type="match status" value="7"/>
</dbReference>
<dbReference type="SUPFAM" id="SSF48452">
    <property type="entry name" value="TPR-like"/>
    <property type="match status" value="4"/>
</dbReference>
<dbReference type="PROSITE" id="PS50005">
    <property type="entry name" value="TPR"/>
    <property type="match status" value="6"/>
</dbReference>
<dbReference type="PROSITE" id="PS50293">
    <property type="entry name" value="TPR_REGION"/>
    <property type="match status" value="3"/>
</dbReference>
<evidence type="ECO:0000250" key="1"/>
<evidence type="ECO:0000255" key="2"/>
<evidence type="ECO:0000305" key="3"/>
<reference key="1">
    <citation type="journal article" date="2002" name="Nature">
        <title>Comparison of the genomes of two Xanthomonas pathogens with differing host specificities.</title>
        <authorList>
            <person name="da Silva A.C.R."/>
            <person name="Ferro J.A."/>
            <person name="Reinach F.C."/>
            <person name="Farah C.S."/>
            <person name="Furlan L.R."/>
            <person name="Quaggio R.B."/>
            <person name="Monteiro-Vitorello C.B."/>
            <person name="Van Sluys M.A."/>
            <person name="Almeida N.F. Jr."/>
            <person name="Alves L.M.C."/>
            <person name="do Amaral A.M."/>
            <person name="Bertolini M.C."/>
            <person name="Camargo L.E.A."/>
            <person name="Camarotte G."/>
            <person name="Cannavan F."/>
            <person name="Cardozo J."/>
            <person name="Chambergo F."/>
            <person name="Ciapina L.P."/>
            <person name="Cicarelli R.M.B."/>
            <person name="Coutinho L.L."/>
            <person name="Cursino-Santos J.R."/>
            <person name="El-Dorry H."/>
            <person name="Faria J.B."/>
            <person name="Ferreira A.J.S."/>
            <person name="Ferreira R.C.C."/>
            <person name="Ferro M.I.T."/>
            <person name="Formighieri E.F."/>
            <person name="Franco M.C."/>
            <person name="Greggio C.C."/>
            <person name="Gruber A."/>
            <person name="Katsuyama A.M."/>
            <person name="Kishi L.T."/>
            <person name="Leite R.P."/>
            <person name="Lemos E.G.M."/>
            <person name="Lemos M.V.F."/>
            <person name="Locali E.C."/>
            <person name="Machado M.A."/>
            <person name="Madeira A.M.B.N."/>
            <person name="Martinez-Rossi N.M."/>
            <person name="Martins E.C."/>
            <person name="Meidanis J."/>
            <person name="Menck C.F.M."/>
            <person name="Miyaki C.Y."/>
            <person name="Moon D.H."/>
            <person name="Moreira L.M."/>
            <person name="Novo M.T.M."/>
            <person name="Okura V.K."/>
            <person name="Oliveira M.C."/>
            <person name="Oliveira V.R."/>
            <person name="Pereira H.A."/>
            <person name="Rossi A."/>
            <person name="Sena J.A.D."/>
            <person name="Silva C."/>
            <person name="de Souza R.F."/>
            <person name="Spinola L.A.F."/>
            <person name="Takita M.A."/>
            <person name="Tamura R.E."/>
            <person name="Teixeira E.C."/>
            <person name="Tezza R.I.D."/>
            <person name="Trindade dos Santos M."/>
            <person name="Truffi D."/>
            <person name="Tsai S.M."/>
            <person name="White F.F."/>
            <person name="Setubal J.C."/>
            <person name="Kitajima J.P."/>
        </authorList>
    </citation>
    <scope>NUCLEOTIDE SEQUENCE [LARGE SCALE GENOMIC DNA]</scope>
    <source>
        <strain>306</strain>
    </source>
</reference>
<sequence>MRRNDLKPFYLAGMLELCLLAAPAAHAQTSATRQLVEQGNYWHDQGRDDLAADTWKKLLGIDPDQPDALLGLAQIDLAQGRQSEARKRLQQLEGAHPQSPQAQRLRVAIGARGSSSAGEDSNLRNARRAASAGRYVEAARSYEAAFAGKPPPPNLALEYYQSLAGTPTGWERARDGLRRLQSSDPDNPSVQLALAQVLSYREPTRRDGIAQLRTLAQRADVGGPARSSWRQALLWLNAGMADAPLYQAFLAGTPNDAEVTAKLGQLRAQRTTATTPADPNGVLLGEGFRALSANNLSAAEQRFTQVLRARARDPEALGGLGSVRLRQQRFAEAQELLRPAAAGNGKWRNALESARYWQQLQQAETARARGDLAQARQLIEQAVQLLPNEPAGHVALGDLQAAGDPVAAEASYRKALARDADNAGALQGLVGLYSRQGRLQEASALFDRLPAAERAKSGGQALLRSNVQRARARQFLDAGDAVSAQTELEAAMVERPGDAWIRLDLARLYQQAGRPDQARSVMDGLLAVHGDQPEALHANALLAQESGDWQGAYDSLDRIPAAARTPAMTQLRATAWIELQARQARQLVAQGRVGEAQQLLARTDTALGNQLDDPQLLAALAGAHADAGNTQRALVLAQRLVTGASPRIEDRLQYASVLLRAHQDAELSAVLRQLQATTMTPEQLRRYQGLRSAYTLRQVDALRELGNLEGAYDALSPVLAQQPGNRDAQAALARLYAAAGEHRQALAIYQQILQRQPSDLDTLTAAANSAAAQSDLRDAERYLQRALAQAPESPDVLAAAGRVYRSAGKNRKAEQYFRAALAAQQRQAGQLDNGLASARGLAAVAASGRPLNPFSGMTGAMPRSPAMLSERMAAGSAYNDVATAPVAYIAPLAMQPGAARVATAAPVNAAADLSSDALPQPVRASTVPSTLPAPSRLRASTHGALPAVSGSDLQPRNIAAQALSARSSGNSVLDELRAVQAENSDGLAGGALYRARDGEDGLGRLDDIEMPVQAEFAVGEGKLGVTLTPTVVDAGTLGTDYATASRFGTGPQSAIGDALAANRGPIDTLVDSPVYQLLATEGDTAATRERLRRYALNTGLFNALLVENNNSTAAALAALANEPLPAYLLSINASNTPIGQLARDILGNAALSEQLGAGDAAALRALAGSTAAAQQTPTGLADTLNAMAASGNGSRRLSQDDTGVGVGVRYRNGGFSAELGSTPIGFQEQNLIGGVGYRGELGDTVSWSAEASRRAVTDSVLSFAGAQDARSGRQWGGVTSTGLSLSATADNGLLGGYANLAAHRLQGNNVADNDHRQVDLGFYVHALETEHQSLTAGVNLTTMQYDKNLSGFTYGHGGYFSPQDYVDLGFPVHWSGRTAGQTVNWKVDASVGVQHFSTEASPYFPTDPTLQQAAYDAASLAALLGLVDRYTDPVYASESRTGVSYNLSGAAEWQVAPQLFLGGRLTFNNARDYNQFSSNLYLRFVMDRLGAALGRAPQVLASPYAAEH</sequence>
<comment type="function">
    <text evidence="1">Required for maximal bacterial cellulose synthesis.</text>
</comment>
<comment type="pathway">
    <text>Glycan metabolism; bacterial cellulose biosynthesis.</text>
</comment>
<comment type="similarity">
    <text evidence="3">Belongs to the AcsC/BcsC family.</text>
</comment>
<feature type="signal peptide" evidence="2">
    <location>
        <begin position="1"/>
        <end position="27"/>
    </location>
</feature>
<feature type="chain" id="PRO_0000035691" description="Cellulose synthase operon protein C">
    <location>
        <begin position="28"/>
        <end position="1508"/>
    </location>
</feature>
<feature type="repeat" description="TPR 1">
    <location>
        <begin position="32"/>
        <end position="65"/>
    </location>
</feature>
<feature type="repeat" description="TPR 2">
    <location>
        <begin position="119"/>
        <end position="152"/>
    </location>
</feature>
<feature type="repeat" description="TPR 3">
    <location>
        <begin position="314"/>
        <end position="347"/>
    </location>
</feature>
<feature type="repeat" description="TPR 4">
    <location>
        <begin position="354"/>
        <end position="389"/>
    </location>
</feature>
<feature type="repeat" description="TPR 5">
    <location>
        <begin position="391"/>
        <end position="422"/>
    </location>
</feature>
<feature type="repeat" description="TPR 6">
    <location>
        <begin position="423"/>
        <end position="456"/>
    </location>
</feature>
<feature type="repeat" description="TPR 7">
    <location>
        <begin position="499"/>
        <end position="532"/>
    </location>
</feature>
<feature type="repeat" description="TPR 8">
    <location>
        <begin position="692"/>
        <end position="725"/>
    </location>
</feature>
<feature type="repeat" description="TPR 9">
    <location>
        <begin position="726"/>
        <end position="759"/>
    </location>
</feature>
<feature type="repeat" description="TPR 10">
    <location>
        <begin position="761"/>
        <end position="793"/>
    </location>
</feature>
<feature type="repeat" description="TPR 11">
    <location>
        <begin position="794"/>
        <end position="827"/>
    </location>
</feature>
<accession>P58938</accession>
<name>BCSC_XANAC</name>
<keyword id="KW-0135">Cellulose biosynthesis</keyword>
<keyword id="KW-0677">Repeat</keyword>
<keyword id="KW-0732">Signal</keyword>
<keyword id="KW-0802">TPR repeat</keyword>
<gene>
    <name type="primary">bcsC</name>
    <name type="ordered locus">XAC3515</name>
</gene>